<name>RLMM_XYLF2</name>
<accession>B2I9N9</accession>
<dbReference type="EC" id="2.1.1.186" evidence="1"/>
<dbReference type="EMBL" id="CP001011">
    <property type="protein sequence ID" value="ACB93410.1"/>
    <property type="status" value="ALT_INIT"/>
    <property type="molecule type" value="Genomic_DNA"/>
</dbReference>
<dbReference type="RefSeq" id="WP_011098306.1">
    <property type="nucleotide sequence ID" value="NC_010577.1"/>
</dbReference>
<dbReference type="SMR" id="B2I9N9"/>
<dbReference type="GeneID" id="93905766"/>
<dbReference type="KEGG" id="xfn:XfasM23_2011"/>
<dbReference type="HOGENOM" id="CLU_043780_0_0_6"/>
<dbReference type="Proteomes" id="UP000001698">
    <property type="component" value="Chromosome"/>
</dbReference>
<dbReference type="GO" id="GO:0005737">
    <property type="term" value="C:cytoplasm"/>
    <property type="evidence" value="ECO:0007669"/>
    <property type="project" value="UniProtKB-SubCell"/>
</dbReference>
<dbReference type="GO" id="GO:0008757">
    <property type="term" value="F:S-adenosylmethionine-dependent methyltransferase activity"/>
    <property type="evidence" value="ECO:0007669"/>
    <property type="project" value="UniProtKB-UniRule"/>
</dbReference>
<dbReference type="GO" id="GO:0032259">
    <property type="term" value="P:methylation"/>
    <property type="evidence" value="ECO:0007669"/>
    <property type="project" value="UniProtKB-KW"/>
</dbReference>
<dbReference type="GO" id="GO:0006364">
    <property type="term" value="P:rRNA processing"/>
    <property type="evidence" value="ECO:0007669"/>
    <property type="project" value="UniProtKB-UniRule"/>
</dbReference>
<dbReference type="Gene3D" id="3.30.2300.20">
    <property type="match status" value="1"/>
</dbReference>
<dbReference type="Gene3D" id="3.30.70.2810">
    <property type="match status" value="1"/>
</dbReference>
<dbReference type="Gene3D" id="3.40.50.150">
    <property type="entry name" value="Vaccinia Virus protein VP39"/>
    <property type="match status" value="1"/>
</dbReference>
<dbReference type="HAMAP" id="MF_01551">
    <property type="entry name" value="23SrRNA_methyltr_M"/>
    <property type="match status" value="1"/>
</dbReference>
<dbReference type="InterPro" id="IPR040739">
    <property type="entry name" value="RlmM_FDX"/>
</dbReference>
<dbReference type="InterPro" id="IPR048646">
    <property type="entry name" value="RlmM_THUMP-like"/>
</dbReference>
<dbReference type="InterPro" id="IPR002877">
    <property type="entry name" value="RNA_MeTrfase_FtsJ_dom"/>
</dbReference>
<dbReference type="InterPro" id="IPR011224">
    <property type="entry name" value="rRNA_MeTrfase_M"/>
</dbReference>
<dbReference type="InterPro" id="IPR029063">
    <property type="entry name" value="SAM-dependent_MTases_sf"/>
</dbReference>
<dbReference type="NCBIfam" id="NF008734">
    <property type="entry name" value="PRK11760.1"/>
    <property type="match status" value="1"/>
</dbReference>
<dbReference type="PANTHER" id="PTHR37524">
    <property type="entry name" value="RIBOSOMAL RNA LARGE SUBUNIT METHYLTRANSFERASE M"/>
    <property type="match status" value="1"/>
</dbReference>
<dbReference type="PANTHER" id="PTHR37524:SF2">
    <property type="entry name" value="RIBOSOMAL RNA METHYLTRANSFERASE FTSJ DOMAIN-CONTAINING PROTEIN"/>
    <property type="match status" value="1"/>
</dbReference>
<dbReference type="Pfam" id="PF01728">
    <property type="entry name" value="FtsJ"/>
    <property type="match status" value="1"/>
</dbReference>
<dbReference type="Pfam" id="PF18125">
    <property type="entry name" value="RlmM_FDX"/>
    <property type="match status" value="1"/>
</dbReference>
<dbReference type="Pfam" id="PF21239">
    <property type="entry name" value="RLMM_N"/>
    <property type="match status" value="1"/>
</dbReference>
<dbReference type="PIRSF" id="PIRSF028774">
    <property type="entry name" value="UCP028774"/>
    <property type="match status" value="1"/>
</dbReference>
<dbReference type="SUPFAM" id="SSF53335">
    <property type="entry name" value="S-adenosyl-L-methionine-dependent methyltransferases"/>
    <property type="match status" value="1"/>
</dbReference>
<gene>
    <name evidence="1" type="primary">rlmM</name>
    <name type="ordered locus">XfasM23_2011</name>
</gene>
<protein>
    <recommendedName>
        <fullName evidence="1">Ribosomal RNA large subunit methyltransferase M</fullName>
        <ecNumber evidence="1">2.1.1.186</ecNumber>
    </recommendedName>
    <alternativeName>
        <fullName evidence="1">23S rRNA (cytidine2498-2'-O)-methyltransferase</fullName>
    </alternativeName>
    <alternativeName>
        <fullName evidence="1">23S rRNA 2'-O-ribose methyltransferase RlmM</fullName>
    </alternativeName>
</protein>
<sequence length="351" mass="40041">MSGLIAYCRQGFEPELAAELRDRAVLLGIASDIHAQRNHGFVLLRCDPLHVDTLLQQLHWRRLIFARQTLRLHAELKTLNSRDRIAPILAALPKTPCFGDLWIEYPDSDMGKPLAGLARSFGNALRPVLRSAGRLSAQLHPQWPRLHVCFLSGDHVLLGSTRSVDSAPWQLGIPRLKLLPEAPSRSALKLEEALITLLTPNEREAKLRPGMCATDLGAAPGGWTWVLICQHLRVTSIDNAALRPPLLNHPLVQHVRADGFRWIPPRPMDWMVCDMVEQPRRVAERMAVWLREGWCRHMIFNLKLPMKKRWDETRLCLERFETQAAVPLTLRAKQLYHDREEITVYASNDAR</sequence>
<feature type="chain" id="PRO_0000388992" description="Ribosomal RNA large subunit methyltransferase M">
    <location>
        <begin position="1"/>
        <end position="351"/>
    </location>
</feature>
<feature type="active site" description="Proton acceptor" evidence="1">
    <location>
        <position position="303"/>
    </location>
</feature>
<feature type="binding site" evidence="1">
    <location>
        <position position="186"/>
    </location>
    <ligand>
        <name>S-adenosyl-L-methionine</name>
        <dbReference type="ChEBI" id="CHEBI:59789"/>
    </ligand>
</feature>
<feature type="binding site" evidence="1">
    <location>
        <begin position="219"/>
        <end position="222"/>
    </location>
    <ligand>
        <name>S-adenosyl-L-methionine</name>
        <dbReference type="ChEBI" id="CHEBI:59789"/>
    </ligand>
</feature>
<feature type="binding site" evidence="1">
    <location>
        <position position="238"/>
    </location>
    <ligand>
        <name>S-adenosyl-L-methionine</name>
        <dbReference type="ChEBI" id="CHEBI:59789"/>
    </ligand>
</feature>
<feature type="binding site" evidence="1">
    <location>
        <position position="258"/>
    </location>
    <ligand>
        <name>S-adenosyl-L-methionine</name>
        <dbReference type="ChEBI" id="CHEBI:59789"/>
    </ligand>
</feature>
<feature type="binding site" evidence="1">
    <location>
        <position position="274"/>
    </location>
    <ligand>
        <name>S-adenosyl-L-methionine</name>
        <dbReference type="ChEBI" id="CHEBI:59789"/>
    </ligand>
</feature>
<organism>
    <name type="scientific">Xylella fastidiosa (strain M23)</name>
    <dbReference type="NCBI Taxonomy" id="405441"/>
    <lineage>
        <taxon>Bacteria</taxon>
        <taxon>Pseudomonadati</taxon>
        <taxon>Pseudomonadota</taxon>
        <taxon>Gammaproteobacteria</taxon>
        <taxon>Lysobacterales</taxon>
        <taxon>Lysobacteraceae</taxon>
        <taxon>Xylella</taxon>
    </lineage>
</organism>
<evidence type="ECO:0000255" key="1">
    <source>
        <dbReference type="HAMAP-Rule" id="MF_01551"/>
    </source>
</evidence>
<evidence type="ECO:0000305" key="2"/>
<keyword id="KW-0963">Cytoplasm</keyword>
<keyword id="KW-0489">Methyltransferase</keyword>
<keyword id="KW-0698">rRNA processing</keyword>
<keyword id="KW-0949">S-adenosyl-L-methionine</keyword>
<keyword id="KW-0808">Transferase</keyword>
<comment type="function">
    <text evidence="1">Catalyzes the 2'-O-methylation at nucleotide C2498 in 23S rRNA.</text>
</comment>
<comment type="catalytic activity">
    <reaction evidence="1">
        <text>cytidine(2498) in 23S rRNA + S-adenosyl-L-methionine = 2'-O-methylcytidine(2498) in 23S rRNA + S-adenosyl-L-homocysteine + H(+)</text>
        <dbReference type="Rhea" id="RHEA:42788"/>
        <dbReference type="Rhea" id="RHEA-COMP:10244"/>
        <dbReference type="Rhea" id="RHEA-COMP:10245"/>
        <dbReference type="ChEBI" id="CHEBI:15378"/>
        <dbReference type="ChEBI" id="CHEBI:57856"/>
        <dbReference type="ChEBI" id="CHEBI:59789"/>
        <dbReference type="ChEBI" id="CHEBI:74495"/>
        <dbReference type="ChEBI" id="CHEBI:82748"/>
        <dbReference type="EC" id="2.1.1.186"/>
    </reaction>
</comment>
<comment type="subunit">
    <text evidence="1">Monomer.</text>
</comment>
<comment type="subcellular location">
    <subcellularLocation>
        <location evidence="1">Cytoplasm</location>
    </subcellularLocation>
</comment>
<comment type="similarity">
    <text evidence="1">Belongs to the class I-like SAM-binding methyltransferase superfamily. RNA methyltransferase RlmE family. RlmM subfamily.</text>
</comment>
<comment type="sequence caution" evidence="2">
    <conflict type="erroneous initiation">
        <sequence resource="EMBL-CDS" id="ACB93410"/>
    </conflict>
</comment>
<reference key="1">
    <citation type="journal article" date="2010" name="J. Bacteriol.">
        <title>Whole genome sequences of two Xylella fastidiosa strains (M12 and M23) causing almond leaf scorch disease in California.</title>
        <authorList>
            <person name="Chen J."/>
            <person name="Xie G."/>
            <person name="Han S."/>
            <person name="Chertkov O."/>
            <person name="Sims D."/>
            <person name="Civerolo E.L."/>
        </authorList>
    </citation>
    <scope>NUCLEOTIDE SEQUENCE [LARGE SCALE GENOMIC DNA]</scope>
    <source>
        <strain>M23</strain>
    </source>
</reference>
<proteinExistence type="inferred from homology"/>